<name>Y6038_DICDI</name>
<accession>Q54V85</accession>
<accession>Q54V84</accession>
<organism>
    <name type="scientific">Dictyostelium discoideum</name>
    <name type="common">Social amoeba</name>
    <dbReference type="NCBI Taxonomy" id="44689"/>
    <lineage>
        <taxon>Eukaryota</taxon>
        <taxon>Amoebozoa</taxon>
        <taxon>Evosea</taxon>
        <taxon>Eumycetozoa</taxon>
        <taxon>Dictyostelia</taxon>
        <taxon>Dictyosteliales</taxon>
        <taxon>Dictyosteliaceae</taxon>
        <taxon>Dictyostelium</taxon>
    </lineage>
</organism>
<proteinExistence type="predicted"/>
<comment type="sequence caution" evidence="2">
    <conflict type="erroneous gene model prediction">
        <sequence resource="EMBL-CDS" id="EAL67078"/>
    </conflict>
</comment>
<comment type="sequence caution" evidence="2">
    <conflict type="erroneous gene model prediction">
        <sequence resource="EMBL-CDS" id="EAL67079"/>
    </conflict>
</comment>
<reference key="1">
    <citation type="journal article" date="2005" name="Nature">
        <title>The genome of the social amoeba Dictyostelium discoideum.</title>
        <authorList>
            <person name="Eichinger L."/>
            <person name="Pachebat J.A."/>
            <person name="Gloeckner G."/>
            <person name="Rajandream M.A."/>
            <person name="Sucgang R."/>
            <person name="Berriman M."/>
            <person name="Song J."/>
            <person name="Olsen R."/>
            <person name="Szafranski K."/>
            <person name="Xu Q."/>
            <person name="Tunggal B."/>
            <person name="Kummerfeld S."/>
            <person name="Madera M."/>
            <person name="Konfortov B.A."/>
            <person name="Rivero F."/>
            <person name="Bankier A.T."/>
            <person name="Lehmann R."/>
            <person name="Hamlin N."/>
            <person name="Davies R."/>
            <person name="Gaudet P."/>
            <person name="Fey P."/>
            <person name="Pilcher K."/>
            <person name="Chen G."/>
            <person name="Saunders D."/>
            <person name="Sodergren E.J."/>
            <person name="Davis P."/>
            <person name="Kerhornou A."/>
            <person name="Nie X."/>
            <person name="Hall N."/>
            <person name="Anjard C."/>
            <person name="Hemphill L."/>
            <person name="Bason N."/>
            <person name="Farbrother P."/>
            <person name="Desany B."/>
            <person name="Just E."/>
            <person name="Morio T."/>
            <person name="Rost R."/>
            <person name="Churcher C.M."/>
            <person name="Cooper J."/>
            <person name="Haydock S."/>
            <person name="van Driessche N."/>
            <person name="Cronin A."/>
            <person name="Goodhead I."/>
            <person name="Muzny D.M."/>
            <person name="Mourier T."/>
            <person name="Pain A."/>
            <person name="Lu M."/>
            <person name="Harper D."/>
            <person name="Lindsay R."/>
            <person name="Hauser H."/>
            <person name="James K.D."/>
            <person name="Quiles M."/>
            <person name="Madan Babu M."/>
            <person name="Saito T."/>
            <person name="Buchrieser C."/>
            <person name="Wardroper A."/>
            <person name="Felder M."/>
            <person name="Thangavelu M."/>
            <person name="Johnson D."/>
            <person name="Knights A."/>
            <person name="Loulseged H."/>
            <person name="Mungall K.L."/>
            <person name="Oliver K."/>
            <person name="Price C."/>
            <person name="Quail M.A."/>
            <person name="Urushihara H."/>
            <person name="Hernandez J."/>
            <person name="Rabbinowitsch E."/>
            <person name="Steffen D."/>
            <person name="Sanders M."/>
            <person name="Ma J."/>
            <person name="Kohara Y."/>
            <person name="Sharp S."/>
            <person name="Simmonds M.N."/>
            <person name="Spiegler S."/>
            <person name="Tivey A."/>
            <person name="Sugano S."/>
            <person name="White B."/>
            <person name="Walker D."/>
            <person name="Woodward J.R."/>
            <person name="Winckler T."/>
            <person name="Tanaka Y."/>
            <person name="Shaulsky G."/>
            <person name="Schleicher M."/>
            <person name="Weinstock G.M."/>
            <person name="Rosenthal A."/>
            <person name="Cox E.C."/>
            <person name="Chisholm R.L."/>
            <person name="Gibbs R.A."/>
            <person name="Loomis W.F."/>
            <person name="Platzer M."/>
            <person name="Kay R.R."/>
            <person name="Williams J.G."/>
            <person name="Dear P.H."/>
            <person name="Noegel A.A."/>
            <person name="Barrell B.G."/>
            <person name="Kuspa A."/>
        </authorList>
    </citation>
    <scope>NUCLEOTIDE SEQUENCE [LARGE SCALE GENOMIC DNA]</scope>
    <source>
        <strain>AX4</strain>
    </source>
</reference>
<sequence>MLVTYNGHVDDNSINNQIIENNVQTDDLNNSFDNHKDQIELKSYKETENIETENIETENKEVETINNEIIKISQEIEISKSQEIDKTNNNINEQNNDNFEIPEKELQEIEACPCNKNIIINDSNNYNVTIIQNDDSIVIENCTDCGDHITPKEEEEKEKEKEKEKEKEKEKEKEKEKDSEESLQEQCLNKENESIDNDNNNNIINNNNNDSIIIIKESTDDKKEIPSIECIQNNQNNQNNNDSPINKEIEDDNNNNIEKDGADIHIKEEQVEKVQVEEKEVEEIQVKDNANSVTSTIVTATDVTTTTTTTTTTTSSSNNCTNSISNTDKSTTTNCPPVENGGDSDGKLMYPLYKKVFGNKTISKLIFKNIRKIQRFKSITIESPSSPLPLSDIHGYGQVKSYSNITFEYMVFNWMIDLLHDKIVKNNEDLNFNNNNNNNNNNNNNNNNNSQPYHYQLKGSQSHEILLKNLKPNDENSKQLLKSFFKKYCDRNSILKKLTEYNNPLLTKLVLKDYLNDFKPVKNNNNNNNNNNNNNNNNNNNNNNNNNNNNNNNNNINNNSYFYKSVPNELLFNLILQQGEIKLVKQVLNGKYKELKLNQMSIHYALKSTLKNEIIQYIINNNRKELSQLYLKSNKCIVGSRRLFLSIFVPPPTTTTTTTNTNSTNTNSTINATSPPHTPKLSSSPLLTTTTTPPASPTQSRIPLVRTLTQLPSRIPLVRTQTQLQTKIQPKSPQPQPTAAPEPQKPPTPSIVKNQMHSQINITPQTKDYIEIGEMIGFEFRIFLELFEVTFPNVPKFRITESCVDSLKELVLKRSIENQNNKSIYSFDVLFDIFRITLHLVLIGCLKLIGDHENNNYNNNNNYNNNINNINYNNNINNNSYNNINNNNYNNNNKTTTTTTTTTTTTTANSNKSKTNKNKNNNNNNNNNNNNNNNNNNNNNNNNNNNNNNNNNEKNIINNDNNINNNEIDISKDKKDLVKFRAIFNQINNLRQTYLFKKKNQEFEIEIKKLFFLDFIPLFGFNEKLLFEKSCLKIDLLHEEKKYGWIIGQEEQPNTLFIKEQLIKSSYEKLDANLFGLSVFLFGIERFSSGSQWFSYPNKIVNNKITNGPYNGNLDKQIQFLEGMIENCKTYKLFDRNETIGIIEAILNSIVITIQNNNDNNNNNNNNNNNNNNNNNNNNNNNNNYNIISIFEKKIQKLLGNCPIKVGAHSLFHSLELIEFCFNNCRDLINFSCCDSMNTLYRDSKFLSIIEFYHRNNLFFGNCSMEIGKSRKRSIAEKIYSFGYRFSNNLIPLAVYNDRESGYLFYYAVEKFIIEKLFNGDGSDYDESNCSSSSSSSESNGIDSGSESGRGRCRSNTTNNSNNINNSSNNNQRFQLHFLLSGNSIPRVIKRNEIFLPTNSKLKWFNLLLSSCGELFTYFPSNEGLCSDFDTPKTNFNLNYEEFYILKFITPFLYKKFKNSFSIKKDFYH</sequence>
<keyword id="KW-1185">Reference proteome</keyword>
<dbReference type="EMBL" id="AAFI02000037">
    <property type="protein sequence ID" value="EAL67078.1"/>
    <property type="status" value="ALT_SEQ"/>
    <property type="molecule type" value="Genomic_DNA"/>
</dbReference>
<dbReference type="EMBL" id="AAFI02000037">
    <property type="protein sequence ID" value="EAL67079.1"/>
    <property type="status" value="ALT_SEQ"/>
    <property type="molecule type" value="Genomic_DNA"/>
</dbReference>
<dbReference type="RefSeq" id="XP_641046.1">
    <property type="nucleotide sequence ID" value="XM_635954.1"/>
</dbReference>
<dbReference type="RefSeq" id="XP_641047.1">
    <property type="nucleotide sequence ID" value="XM_635955.1"/>
</dbReference>
<dbReference type="GlyGen" id="Q54V85">
    <property type="glycosylation" value="1 site"/>
</dbReference>
<dbReference type="PaxDb" id="44689-DDB0206039"/>
<dbReference type="EnsemblProtists" id="EAL67078">
    <property type="protein sequence ID" value="EAL67078"/>
    <property type="gene ID" value="DDB_G0280553"/>
</dbReference>
<dbReference type="EnsemblProtists" id="EAL67079">
    <property type="protein sequence ID" value="EAL67079"/>
    <property type="gene ID" value="DDB_G0280555"/>
</dbReference>
<dbReference type="GeneID" id="8622605"/>
<dbReference type="KEGG" id="ddi:DDB_G0280553"/>
<dbReference type="KEGG" id="ddi:DDB_G0280555"/>
<dbReference type="dictyBase" id="DDB_G0280555"/>
<dbReference type="VEuPathDB" id="AmoebaDB:DDB_G0280553"/>
<dbReference type="VEuPathDB" id="AmoebaDB:DDB_G0280555"/>
<dbReference type="InParanoid" id="Q54V85"/>
<dbReference type="PRO" id="PR:Q54V85"/>
<dbReference type="Proteomes" id="UP000002195">
    <property type="component" value="Chromosome 3"/>
</dbReference>
<dbReference type="InterPro" id="IPR052660">
    <property type="entry name" value="Erythrocyte_Invasion_ImmMod"/>
</dbReference>
<dbReference type="PANTHER" id="PTHR16021">
    <property type="entry name" value="MANSC DOMAIN CONTAINING PROTEIN 1"/>
    <property type="match status" value="1"/>
</dbReference>
<dbReference type="PANTHER" id="PTHR16021:SF22">
    <property type="entry name" value="OXIDANT-INDUCED CELL-CYCLE ARREST PROTEIN 5"/>
    <property type="match status" value="1"/>
</dbReference>
<feature type="chain" id="PRO_0000352442" description="Putative uncharacterized protein DDB_G0280555">
    <location>
        <begin position="1"/>
        <end position="1469"/>
    </location>
</feature>
<feature type="region of interest" description="Disordered" evidence="1">
    <location>
        <begin position="146"/>
        <end position="186"/>
    </location>
</feature>
<feature type="region of interest" description="Disordered" evidence="1">
    <location>
        <begin position="231"/>
        <end position="255"/>
    </location>
</feature>
<feature type="region of interest" description="Disordered" evidence="1">
    <location>
        <begin position="306"/>
        <end position="344"/>
    </location>
</feature>
<feature type="region of interest" description="Disordered" evidence="1">
    <location>
        <begin position="430"/>
        <end position="455"/>
    </location>
</feature>
<feature type="region of interest" description="Disordered" evidence="1">
    <location>
        <begin position="520"/>
        <end position="560"/>
    </location>
</feature>
<feature type="region of interest" description="Disordered" evidence="1">
    <location>
        <begin position="654"/>
        <end position="706"/>
    </location>
</feature>
<feature type="region of interest" description="Disordered" evidence="1">
    <location>
        <begin position="719"/>
        <end position="755"/>
    </location>
</feature>
<feature type="region of interest" description="Disordered" evidence="1">
    <location>
        <begin position="881"/>
        <end position="958"/>
    </location>
</feature>
<feature type="region of interest" description="Disordered" evidence="1">
    <location>
        <begin position="1329"/>
        <end position="1369"/>
    </location>
</feature>
<feature type="compositionally biased region" description="Basic and acidic residues" evidence="1">
    <location>
        <begin position="146"/>
        <end position="180"/>
    </location>
</feature>
<feature type="compositionally biased region" description="Low complexity" evidence="1">
    <location>
        <begin position="232"/>
        <end position="241"/>
    </location>
</feature>
<feature type="compositionally biased region" description="Low complexity" evidence="1">
    <location>
        <begin position="306"/>
        <end position="327"/>
    </location>
</feature>
<feature type="compositionally biased region" description="Low complexity" evidence="1">
    <location>
        <begin position="430"/>
        <end position="449"/>
    </location>
</feature>
<feature type="compositionally biased region" description="Low complexity" evidence="1">
    <location>
        <begin position="523"/>
        <end position="559"/>
    </location>
</feature>
<feature type="compositionally biased region" description="Low complexity" evidence="1">
    <location>
        <begin position="654"/>
        <end position="693"/>
    </location>
</feature>
<feature type="compositionally biased region" description="Polar residues" evidence="1">
    <location>
        <begin position="719"/>
        <end position="731"/>
    </location>
</feature>
<feature type="compositionally biased region" description="Pro residues" evidence="1">
    <location>
        <begin position="732"/>
        <end position="749"/>
    </location>
</feature>
<feature type="compositionally biased region" description="Low complexity" evidence="1">
    <location>
        <begin position="1329"/>
        <end position="1347"/>
    </location>
</feature>
<feature type="compositionally biased region" description="Low complexity" evidence="1">
    <location>
        <begin position="1354"/>
        <end position="1369"/>
    </location>
</feature>
<evidence type="ECO:0000256" key="1">
    <source>
        <dbReference type="SAM" id="MobiDB-lite"/>
    </source>
</evidence>
<evidence type="ECO:0000305" key="2"/>
<protein>
    <recommendedName>
        <fullName>Putative uncharacterized protein DDB_G0280555</fullName>
    </recommendedName>
</protein>
<gene>
    <name type="ORF">DDB_G0280555</name>
</gene>